<gene>
    <name evidence="1" type="primary">ahcY</name>
    <name type="ordered locus">AF_2000</name>
</gene>
<dbReference type="EC" id="3.13.2.1" evidence="1"/>
<dbReference type="EMBL" id="AE000782">
    <property type="protein sequence ID" value="AAB89252.1"/>
    <property type="molecule type" value="Genomic_DNA"/>
</dbReference>
<dbReference type="PIR" id="G69499">
    <property type="entry name" value="G69499"/>
</dbReference>
<dbReference type="RefSeq" id="WP_010879492.1">
    <property type="nucleotide sequence ID" value="NC_000917.1"/>
</dbReference>
<dbReference type="SMR" id="O28279"/>
<dbReference type="STRING" id="224325.AF_2000"/>
<dbReference type="PaxDb" id="224325-AF_2000"/>
<dbReference type="EnsemblBacteria" id="AAB89252">
    <property type="protein sequence ID" value="AAB89252"/>
    <property type="gene ID" value="AF_2000"/>
</dbReference>
<dbReference type="GeneID" id="24795746"/>
<dbReference type="KEGG" id="afu:AF_2000"/>
<dbReference type="eggNOG" id="arCOG04137">
    <property type="taxonomic scope" value="Archaea"/>
</dbReference>
<dbReference type="HOGENOM" id="CLU_025194_0_2_2"/>
<dbReference type="OrthoDB" id="8479at2157"/>
<dbReference type="PhylomeDB" id="O28279"/>
<dbReference type="UniPathway" id="UPA00314">
    <property type="reaction ID" value="UER00076"/>
</dbReference>
<dbReference type="Proteomes" id="UP000002199">
    <property type="component" value="Chromosome"/>
</dbReference>
<dbReference type="GO" id="GO:0005829">
    <property type="term" value="C:cytosol"/>
    <property type="evidence" value="ECO:0007669"/>
    <property type="project" value="TreeGrafter"/>
</dbReference>
<dbReference type="GO" id="GO:0004013">
    <property type="term" value="F:adenosylhomocysteinase activity"/>
    <property type="evidence" value="ECO:0007669"/>
    <property type="project" value="UniProtKB-UniRule"/>
</dbReference>
<dbReference type="GO" id="GO:0071269">
    <property type="term" value="P:L-homocysteine biosynthetic process"/>
    <property type="evidence" value="ECO:0007669"/>
    <property type="project" value="UniProtKB-UniRule"/>
</dbReference>
<dbReference type="GO" id="GO:0006730">
    <property type="term" value="P:one-carbon metabolic process"/>
    <property type="evidence" value="ECO:0007669"/>
    <property type="project" value="UniProtKB-KW"/>
</dbReference>
<dbReference type="GO" id="GO:0033353">
    <property type="term" value="P:S-adenosylmethionine cycle"/>
    <property type="evidence" value="ECO:0007669"/>
    <property type="project" value="TreeGrafter"/>
</dbReference>
<dbReference type="CDD" id="cd00401">
    <property type="entry name" value="SAHH"/>
    <property type="match status" value="1"/>
</dbReference>
<dbReference type="FunFam" id="3.40.50.720:FF:000004">
    <property type="entry name" value="Adenosylhomocysteinase"/>
    <property type="match status" value="1"/>
</dbReference>
<dbReference type="Gene3D" id="3.40.50.1480">
    <property type="entry name" value="Adenosylhomocysteinase-like"/>
    <property type="match status" value="1"/>
</dbReference>
<dbReference type="Gene3D" id="3.40.50.720">
    <property type="entry name" value="NAD(P)-binding Rossmann-like Domain"/>
    <property type="match status" value="1"/>
</dbReference>
<dbReference type="HAMAP" id="MF_00563">
    <property type="entry name" value="AdoHcyase"/>
    <property type="match status" value="1"/>
</dbReference>
<dbReference type="InterPro" id="IPR042172">
    <property type="entry name" value="Adenosylhomocyst_ase-like_sf"/>
</dbReference>
<dbReference type="InterPro" id="IPR000043">
    <property type="entry name" value="Adenosylhomocysteinase-like"/>
</dbReference>
<dbReference type="InterPro" id="IPR015878">
    <property type="entry name" value="Ado_hCys_hydrolase_NAD-bd"/>
</dbReference>
<dbReference type="InterPro" id="IPR036291">
    <property type="entry name" value="NAD(P)-bd_dom_sf"/>
</dbReference>
<dbReference type="InterPro" id="IPR020082">
    <property type="entry name" value="S-Ado-L-homoCys_hydrolase_CS"/>
</dbReference>
<dbReference type="NCBIfam" id="TIGR00936">
    <property type="entry name" value="ahcY"/>
    <property type="match status" value="1"/>
</dbReference>
<dbReference type="NCBIfam" id="NF004005">
    <property type="entry name" value="PRK05476.2-3"/>
    <property type="match status" value="1"/>
</dbReference>
<dbReference type="PANTHER" id="PTHR23420">
    <property type="entry name" value="ADENOSYLHOMOCYSTEINASE"/>
    <property type="match status" value="1"/>
</dbReference>
<dbReference type="PANTHER" id="PTHR23420:SF0">
    <property type="entry name" value="ADENOSYLHOMOCYSTEINASE"/>
    <property type="match status" value="1"/>
</dbReference>
<dbReference type="Pfam" id="PF05221">
    <property type="entry name" value="AdoHcyase"/>
    <property type="match status" value="2"/>
</dbReference>
<dbReference type="Pfam" id="PF00670">
    <property type="entry name" value="AdoHcyase_NAD"/>
    <property type="match status" value="1"/>
</dbReference>
<dbReference type="PIRSF" id="PIRSF001109">
    <property type="entry name" value="Ad_hcy_hydrolase"/>
    <property type="match status" value="1"/>
</dbReference>
<dbReference type="SMART" id="SM00996">
    <property type="entry name" value="AdoHcyase"/>
    <property type="match status" value="1"/>
</dbReference>
<dbReference type="SMART" id="SM00997">
    <property type="entry name" value="AdoHcyase_NAD"/>
    <property type="match status" value="1"/>
</dbReference>
<dbReference type="SUPFAM" id="SSF52283">
    <property type="entry name" value="Formate/glycerate dehydrogenase catalytic domain-like"/>
    <property type="match status" value="1"/>
</dbReference>
<dbReference type="SUPFAM" id="SSF51735">
    <property type="entry name" value="NAD(P)-binding Rossmann-fold domains"/>
    <property type="match status" value="1"/>
</dbReference>
<dbReference type="PROSITE" id="PS00738">
    <property type="entry name" value="ADOHCYASE_1"/>
    <property type="match status" value="1"/>
</dbReference>
<dbReference type="PROSITE" id="PS00739">
    <property type="entry name" value="ADOHCYASE_2"/>
    <property type="match status" value="1"/>
</dbReference>
<keyword id="KW-0963">Cytoplasm</keyword>
<keyword id="KW-0378">Hydrolase</keyword>
<keyword id="KW-0520">NAD</keyword>
<keyword id="KW-0554">One-carbon metabolism</keyword>
<keyword id="KW-1185">Reference proteome</keyword>
<sequence>MEGFRKIEWAERYMKVLGKIREQFRKERPLEGFTVGMALHVEAKTAVLVRTLVDAGAEVAITGCNPMSTQDDVADALRESGIACYAKRGMDVEEYYEALRNVIRAEPDIVIDDGADLIFLLHGEMESYAEKVKGASEETTTGVIRLRAMEREGVLKFPVIAVNDAYTKYLFDNRYGTGQSAIDGVIRATNLLMAGKIVVVAGYGWCGRGIAMRARGMGASVVVTEVDEIRALEAVMDGFRVMRMEDAAKIGDIFITATGNRDIIREEHIRLMKDGAILANAGHFNVEIDIPALERMAKAKREARKYVTEYDLGDKRVYLLAEGRLVNLVAADGHPVEVMDMSFANQALAAKYIAENWQKLERKVYRLPEELDRMVARMKLESMGVEIDQLTEEQVRYLSDWRCGT</sequence>
<reference key="1">
    <citation type="journal article" date="1997" name="Nature">
        <title>The complete genome sequence of the hyperthermophilic, sulphate-reducing archaeon Archaeoglobus fulgidus.</title>
        <authorList>
            <person name="Klenk H.-P."/>
            <person name="Clayton R.A."/>
            <person name="Tomb J.-F."/>
            <person name="White O."/>
            <person name="Nelson K.E."/>
            <person name="Ketchum K.A."/>
            <person name="Dodson R.J."/>
            <person name="Gwinn M.L."/>
            <person name="Hickey E.K."/>
            <person name="Peterson J.D."/>
            <person name="Richardson D.L."/>
            <person name="Kerlavage A.R."/>
            <person name="Graham D.E."/>
            <person name="Kyrpides N.C."/>
            <person name="Fleischmann R.D."/>
            <person name="Quackenbush J."/>
            <person name="Lee N.H."/>
            <person name="Sutton G.G."/>
            <person name="Gill S.R."/>
            <person name="Kirkness E.F."/>
            <person name="Dougherty B.A."/>
            <person name="McKenney K."/>
            <person name="Adams M.D."/>
            <person name="Loftus B.J."/>
            <person name="Peterson S.N."/>
            <person name="Reich C.I."/>
            <person name="McNeil L.K."/>
            <person name="Badger J.H."/>
            <person name="Glodek A."/>
            <person name="Zhou L."/>
            <person name="Overbeek R."/>
            <person name="Gocayne J.D."/>
            <person name="Weidman J.F."/>
            <person name="McDonald L.A."/>
            <person name="Utterback T.R."/>
            <person name="Cotton M.D."/>
            <person name="Spriggs T."/>
            <person name="Artiach P."/>
            <person name="Kaine B.P."/>
            <person name="Sykes S.M."/>
            <person name="Sadow P.W."/>
            <person name="D'Andrea K.P."/>
            <person name="Bowman C."/>
            <person name="Fujii C."/>
            <person name="Garland S.A."/>
            <person name="Mason T.M."/>
            <person name="Olsen G.J."/>
            <person name="Fraser C.M."/>
            <person name="Smith H.O."/>
            <person name="Woese C.R."/>
            <person name="Venter J.C."/>
        </authorList>
    </citation>
    <scope>NUCLEOTIDE SEQUENCE [LARGE SCALE GENOMIC DNA]</scope>
    <source>
        <strain>ATCC 49558 / DSM 4304 / JCM 9628 / NBRC 100126 / VC-16</strain>
    </source>
</reference>
<evidence type="ECO:0000255" key="1">
    <source>
        <dbReference type="HAMAP-Rule" id="MF_00563"/>
    </source>
</evidence>
<accession>O28279</accession>
<comment type="function">
    <text evidence="1">May play a key role in the regulation of the intracellular concentration of adenosylhomocysteine.</text>
</comment>
<comment type="catalytic activity">
    <reaction evidence="1">
        <text>S-adenosyl-L-homocysteine + H2O = L-homocysteine + adenosine</text>
        <dbReference type="Rhea" id="RHEA:21708"/>
        <dbReference type="ChEBI" id="CHEBI:15377"/>
        <dbReference type="ChEBI" id="CHEBI:16335"/>
        <dbReference type="ChEBI" id="CHEBI:57856"/>
        <dbReference type="ChEBI" id="CHEBI:58199"/>
        <dbReference type="EC" id="3.13.2.1"/>
    </reaction>
</comment>
<comment type="cofactor">
    <cofactor evidence="1">
        <name>NAD(+)</name>
        <dbReference type="ChEBI" id="CHEBI:57540"/>
    </cofactor>
    <text evidence="1">Binds 1 NAD(+) per subunit.</text>
</comment>
<comment type="pathway">
    <text evidence="1">Amino-acid biosynthesis; L-homocysteine biosynthesis; L-homocysteine from S-adenosyl-L-homocysteine: step 1/1.</text>
</comment>
<comment type="subcellular location">
    <subcellularLocation>
        <location evidence="1">Cytoplasm</location>
    </subcellularLocation>
</comment>
<comment type="similarity">
    <text evidence="1">Belongs to the adenosylhomocysteinase family.</text>
</comment>
<proteinExistence type="inferred from homology"/>
<feature type="chain" id="PRO_0000117001" description="Adenosylhomocysteinase">
    <location>
        <begin position="1"/>
        <end position="405"/>
    </location>
</feature>
<feature type="binding site" evidence="1">
    <location>
        <position position="113"/>
    </location>
    <ligand>
        <name>substrate</name>
    </ligand>
</feature>
<feature type="binding site" evidence="1">
    <location>
        <position position="138"/>
    </location>
    <ligand>
        <name>substrate</name>
    </ligand>
</feature>
<feature type="binding site" evidence="1">
    <location>
        <begin position="139"/>
        <end position="141"/>
    </location>
    <ligand>
        <name>NAD(+)</name>
        <dbReference type="ChEBI" id="CHEBI:57540"/>
    </ligand>
</feature>
<feature type="binding site" evidence="1">
    <location>
        <position position="168"/>
    </location>
    <ligand>
        <name>substrate</name>
    </ligand>
</feature>
<feature type="binding site" evidence="1">
    <location>
        <position position="172"/>
    </location>
    <ligand>
        <name>substrate</name>
    </ligand>
</feature>
<feature type="binding site" evidence="1">
    <location>
        <position position="173"/>
    </location>
    <ligand>
        <name>NAD(+)</name>
        <dbReference type="ChEBI" id="CHEBI:57540"/>
    </ligand>
</feature>
<feature type="binding site" evidence="1">
    <location>
        <begin position="202"/>
        <end position="207"/>
    </location>
    <ligand>
        <name>NAD(+)</name>
        <dbReference type="ChEBI" id="CHEBI:57540"/>
    </ligand>
</feature>
<feature type="binding site" evidence="1">
    <location>
        <position position="225"/>
    </location>
    <ligand>
        <name>NAD(+)</name>
        <dbReference type="ChEBI" id="CHEBI:57540"/>
    </ligand>
</feature>
<feature type="binding site" evidence="1">
    <location>
        <position position="260"/>
    </location>
    <ligand>
        <name>NAD(+)</name>
        <dbReference type="ChEBI" id="CHEBI:57540"/>
    </ligand>
</feature>
<feature type="binding site" evidence="1">
    <location>
        <begin position="281"/>
        <end position="283"/>
    </location>
    <ligand>
        <name>NAD(+)</name>
        <dbReference type="ChEBI" id="CHEBI:57540"/>
    </ligand>
</feature>
<feature type="binding site" evidence="1">
    <location>
        <position position="327"/>
    </location>
    <ligand>
        <name>NAD(+)</name>
        <dbReference type="ChEBI" id="CHEBI:57540"/>
    </ligand>
</feature>
<protein>
    <recommendedName>
        <fullName evidence="1">Adenosylhomocysteinase</fullName>
        <ecNumber evidence="1">3.13.2.1</ecNumber>
    </recommendedName>
    <alternativeName>
        <fullName evidence="1">S-adenosyl-L-homocysteine hydrolase</fullName>
        <shortName evidence="1">AdoHcyase</shortName>
    </alternativeName>
</protein>
<name>SAHH_ARCFU</name>
<organism>
    <name type="scientific">Archaeoglobus fulgidus (strain ATCC 49558 / DSM 4304 / JCM 9628 / NBRC 100126 / VC-16)</name>
    <dbReference type="NCBI Taxonomy" id="224325"/>
    <lineage>
        <taxon>Archaea</taxon>
        <taxon>Methanobacteriati</taxon>
        <taxon>Methanobacteriota</taxon>
        <taxon>Archaeoglobi</taxon>
        <taxon>Archaeoglobales</taxon>
        <taxon>Archaeoglobaceae</taxon>
        <taxon>Archaeoglobus</taxon>
    </lineage>
</organism>